<reference key="1">
    <citation type="submission" date="2007-03" db="EMBL/GenBank/DDBJ databases">
        <title>Sequencing analysis of Lobularia maritima chloroplast DNA.</title>
        <authorList>
            <person name="Hosouchi T."/>
            <person name="Tsuruoka H."/>
            <person name="Kotani H."/>
        </authorList>
    </citation>
    <scope>NUCLEOTIDE SEQUENCE [LARGE SCALE GENOMIC DNA]</scope>
</reference>
<comment type="function">
    <text evidence="1">F(1)F(0) ATP synthase produces ATP from ADP in the presence of a proton or sodium gradient. F-type ATPases consist of two structural domains, F(1) containing the extramembraneous catalytic core and F(0) containing the membrane proton channel, linked together by a central stalk and a peripheral stalk. During catalysis, ATP synthesis in the catalytic domain of F(1) is coupled via a rotary mechanism of the central stalk subunits to proton translocation.</text>
</comment>
<comment type="function">
    <text evidence="1">Component of the F(0) channel, it forms part of the peripheral stalk, linking F(1) to F(0).</text>
</comment>
<comment type="subunit">
    <text evidence="1">F-type ATPases have 2 components, F(1) - the catalytic core - and F(0) - the membrane proton channel. F(1) has five subunits: alpha(3), beta(3), gamma(1), delta(1), epsilon(1). F(0) has four main subunits: a(1), b(1), b'(1) and c(10-14). The alpha and beta chains form an alternating ring which encloses part of the gamma chain. F(1) is attached to F(0) by a central stalk formed by the gamma and epsilon chains, while a peripheral stalk is formed by the delta, b and b' chains.</text>
</comment>
<comment type="subcellular location">
    <subcellularLocation>
        <location evidence="1">Plastid</location>
        <location evidence="1">Chloroplast thylakoid membrane</location>
        <topology evidence="1">Single-pass membrane protein</topology>
    </subcellularLocation>
</comment>
<comment type="miscellaneous">
    <text>In plastids the F-type ATPase is also known as CF(1)CF(0).</text>
</comment>
<comment type="similarity">
    <text evidence="1">Belongs to the ATPase B chain family.</text>
</comment>
<feature type="chain" id="PRO_0000368949" description="ATP synthase subunit b, chloroplastic">
    <location>
        <begin position="1"/>
        <end position="184"/>
    </location>
</feature>
<feature type="transmembrane region" description="Helical" evidence="1">
    <location>
        <begin position="27"/>
        <end position="49"/>
    </location>
</feature>
<dbReference type="EMBL" id="AP009375">
    <property type="protein sequence ID" value="BAF50535.1"/>
    <property type="molecule type" value="Genomic_DNA"/>
</dbReference>
<dbReference type="RefSeq" id="YP_001123711.1">
    <property type="nucleotide sequence ID" value="NC_009274.1"/>
</dbReference>
<dbReference type="SMR" id="A4QLI0"/>
<dbReference type="GeneID" id="4964923"/>
<dbReference type="GO" id="GO:0009535">
    <property type="term" value="C:chloroplast thylakoid membrane"/>
    <property type="evidence" value="ECO:0007669"/>
    <property type="project" value="UniProtKB-SubCell"/>
</dbReference>
<dbReference type="GO" id="GO:0045259">
    <property type="term" value="C:proton-transporting ATP synthase complex"/>
    <property type="evidence" value="ECO:0007669"/>
    <property type="project" value="UniProtKB-KW"/>
</dbReference>
<dbReference type="GO" id="GO:0046933">
    <property type="term" value="F:proton-transporting ATP synthase activity, rotational mechanism"/>
    <property type="evidence" value="ECO:0007669"/>
    <property type="project" value="UniProtKB-UniRule"/>
</dbReference>
<dbReference type="CDD" id="cd06503">
    <property type="entry name" value="ATP-synt_Fo_b"/>
    <property type="match status" value="1"/>
</dbReference>
<dbReference type="HAMAP" id="MF_01398">
    <property type="entry name" value="ATP_synth_b_bprime"/>
    <property type="match status" value="1"/>
</dbReference>
<dbReference type="InterPro" id="IPR002146">
    <property type="entry name" value="ATP_synth_b/b'su_bac/chlpt"/>
</dbReference>
<dbReference type="PANTHER" id="PTHR34264">
    <property type="entry name" value="ATP SYNTHASE SUBUNIT B, CHLOROPLASTIC"/>
    <property type="match status" value="1"/>
</dbReference>
<dbReference type="PANTHER" id="PTHR34264:SF3">
    <property type="entry name" value="ATP SYNTHASE SUBUNIT B, CHLOROPLASTIC"/>
    <property type="match status" value="1"/>
</dbReference>
<dbReference type="Pfam" id="PF00430">
    <property type="entry name" value="ATP-synt_B"/>
    <property type="match status" value="1"/>
</dbReference>
<accession>A4QLI0</accession>
<keyword id="KW-0066">ATP synthesis</keyword>
<keyword id="KW-0138">CF(0)</keyword>
<keyword id="KW-0150">Chloroplast</keyword>
<keyword id="KW-0375">Hydrogen ion transport</keyword>
<keyword id="KW-0406">Ion transport</keyword>
<keyword id="KW-0472">Membrane</keyword>
<keyword id="KW-0934">Plastid</keyword>
<keyword id="KW-0793">Thylakoid</keyword>
<keyword id="KW-0812">Transmembrane</keyword>
<keyword id="KW-1133">Transmembrane helix</keyword>
<keyword id="KW-0813">Transport</keyword>
<protein>
    <recommendedName>
        <fullName evidence="1">ATP synthase subunit b, chloroplastic</fullName>
    </recommendedName>
    <alternativeName>
        <fullName evidence="1">ATP synthase F(0) sector subunit b</fullName>
    </alternativeName>
    <alternativeName>
        <fullName evidence="1">ATPase subunit I</fullName>
    </alternativeName>
</protein>
<evidence type="ECO:0000255" key="1">
    <source>
        <dbReference type="HAMAP-Rule" id="MF_01398"/>
    </source>
</evidence>
<geneLocation type="chloroplast"/>
<gene>
    <name evidence="1" type="primary">atpF</name>
</gene>
<sequence length="184" mass="20914">MKNLTDSFVYLGHWPAAGSFGFNTDILATNPINLSVVFGVLIFFGKGVLNDLLDNRKQRILNTIRNSEELREGAIQQLENARARLRKVEAEADQFRVNGYSEIEREKLNLINSTSKTLKQLENYKNETILVEQQRTINQVRERIFQQALQGAIGTLNSCLSNELHLRTINANIGMFGTMKKITD</sequence>
<organism>
    <name type="scientific">Lobularia maritima</name>
    <name type="common">Sweet alyssum</name>
    <name type="synonym">Alyssum maritimum</name>
    <dbReference type="NCBI Taxonomy" id="226051"/>
    <lineage>
        <taxon>Eukaryota</taxon>
        <taxon>Viridiplantae</taxon>
        <taxon>Streptophyta</taxon>
        <taxon>Embryophyta</taxon>
        <taxon>Tracheophyta</taxon>
        <taxon>Spermatophyta</taxon>
        <taxon>Magnoliopsida</taxon>
        <taxon>eudicotyledons</taxon>
        <taxon>Gunneridae</taxon>
        <taxon>Pentapetalae</taxon>
        <taxon>rosids</taxon>
        <taxon>malvids</taxon>
        <taxon>Brassicales</taxon>
        <taxon>Brassicaceae</taxon>
        <taxon>Anastaticeae</taxon>
        <taxon>Lobularia</taxon>
    </lineage>
</organism>
<proteinExistence type="inferred from homology"/>
<name>ATPF_LOBMA</name>